<reference key="1">
    <citation type="journal article" date="1993" name="Mol. Plant Microbe Interact.">
        <title>Genetic analysis of the Rhizobium meliloti exoYFQ operon: ExoY is homologous to sugar transferases and ExoQ represents a transmembrane protein.</title>
        <authorList>
            <person name="Mueller P."/>
            <person name="Keller M."/>
            <person name="Weng W.M."/>
            <person name="Quandt J."/>
            <person name="Arnold W."/>
            <person name="Puehler A."/>
        </authorList>
    </citation>
    <scope>NUCLEOTIDE SEQUENCE [GENOMIC DNA]</scope>
    <source>
        <strain>RCR2011 / SU47</strain>
    </source>
</reference>
<reference key="2">
    <citation type="journal article" date="1991" name="J. Bacteriol.">
        <title>Rhizobium meliloti exoG and exoJ mutations affect the exoX-exoY system for modulation of exopolysaccharide production.</title>
        <authorList>
            <person name="Reed J.W."/>
            <person name="Capage M."/>
            <person name="Walker G.C."/>
        </authorList>
    </citation>
    <scope>NUCLEOTIDE SEQUENCE [GENOMIC DNA]</scope>
    <source>
        <strain>1021</strain>
    </source>
</reference>
<reference key="3">
    <citation type="journal article" date="2001" name="Proc. Natl. Acad. Sci. U.S.A.">
        <title>The complete sequence of the 1,683-kb pSymB megaplasmid from the N2-fixing endosymbiont Sinorhizobium meliloti.</title>
        <authorList>
            <person name="Finan T.M."/>
            <person name="Weidner S."/>
            <person name="Wong K."/>
            <person name="Buhrmester J."/>
            <person name="Chain P."/>
            <person name="Vorhoelter F.J."/>
            <person name="Hernandez-Lucas I."/>
            <person name="Becker A."/>
            <person name="Cowie A."/>
            <person name="Gouzy J."/>
            <person name="Golding B."/>
            <person name="Puehler A."/>
        </authorList>
    </citation>
    <scope>NUCLEOTIDE SEQUENCE [LARGE SCALE GENOMIC DNA]</scope>
    <source>
        <strain>1021</strain>
    </source>
</reference>
<reference key="4">
    <citation type="journal article" date="2001" name="Science">
        <title>The composite genome of the legume symbiont Sinorhizobium meliloti.</title>
        <authorList>
            <person name="Galibert F."/>
            <person name="Finan T.M."/>
            <person name="Long S.R."/>
            <person name="Puehler A."/>
            <person name="Abola P."/>
            <person name="Ampe F."/>
            <person name="Barloy-Hubler F."/>
            <person name="Barnett M.J."/>
            <person name="Becker A."/>
            <person name="Boistard P."/>
            <person name="Bothe G."/>
            <person name="Boutry M."/>
            <person name="Bowser L."/>
            <person name="Buhrmester J."/>
            <person name="Cadieu E."/>
            <person name="Capela D."/>
            <person name="Chain P."/>
            <person name="Cowie A."/>
            <person name="Davis R.W."/>
            <person name="Dreano S."/>
            <person name="Federspiel N.A."/>
            <person name="Fisher R.F."/>
            <person name="Gloux S."/>
            <person name="Godrie T."/>
            <person name="Goffeau A."/>
            <person name="Golding B."/>
            <person name="Gouzy J."/>
            <person name="Gurjal M."/>
            <person name="Hernandez-Lucas I."/>
            <person name="Hong A."/>
            <person name="Huizar L."/>
            <person name="Hyman R.W."/>
            <person name="Jones T."/>
            <person name="Kahn D."/>
            <person name="Kahn M.L."/>
            <person name="Kalman S."/>
            <person name="Keating D.H."/>
            <person name="Kiss E."/>
            <person name="Komp C."/>
            <person name="Lelaure V."/>
            <person name="Masuy D."/>
            <person name="Palm C."/>
            <person name="Peck M.C."/>
            <person name="Pohl T.M."/>
            <person name="Portetelle D."/>
            <person name="Purnelle B."/>
            <person name="Ramsperger U."/>
            <person name="Surzycki R."/>
            <person name="Thebault P."/>
            <person name="Vandenbol M."/>
            <person name="Vorhoelter F.J."/>
            <person name="Weidner S."/>
            <person name="Wells D.H."/>
            <person name="Wong K."/>
            <person name="Yeh K.-C."/>
            <person name="Batut J."/>
        </authorList>
    </citation>
    <scope>NUCLEOTIDE SEQUENCE [LARGE SCALE GENOMIC DNA]</scope>
    <source>
        <strain>1021</strain>
    </source>
</reference>
<feature type="chain" id="PRO_0000087139" description="Exopolysaccharide production repressor protein">
    <location>
        <begin position="1"/>
        <end position="98"/>
    </location>
</feature>
<feature type="transmembrane region" description="Helical" evidence="1">
    <location>
        <begin position="6"/>
        <end position="26"/>
    </location>
</feature>
<feature type="transmembrane region" description="Helical" evidence="1">
    <location>
        <begin position="35"/>
        <end position="55"/>
    </location>
</feature>
<feature type="region of interest" description="Disordered" evidence="2">
    <location>
        <begin position="73"/>
        <end position="98"/>
    </location>
</feature>
<feature type="compositionally biased region" description="Basic residues" evidence="2">
    <location>
        <begin position="86"/>
        <end position="98"/>
    </location>
</feature>
<sequence>MFAPRVFLSMIGALAAFAVATYYLNGSLASTAIQTLICAVLIQVGYFIAVLFLVWKEARERRRLSSQKQFMTAEAANDEKQPGKVSLRRLNRPHHLNS</sequence>
<proteinExistence type="predicted"/>
<dbReference type="EMBL" id="L05588">
    <property type="protein sequence ID" value="AAA26263.1"/>
    <property type="molecule type" value="Genomic_DNA"/>
</dbReference>
<dbReference type="EMBL" id="M61751">
    <property type="protein sequence ID" value="AAA26261.1"/>
    <property type="molecule type" value="Genomic_DNA"/>
</dbReference>
<dbReference type="EMBL" id="AL591985">
    <property type="protein sequence ID" value="CAC49470.1"/>
    <property type="molecule type" value="Genomic_DNA"/>
</dbReference>
<dbReference type="PIR" id="A39437">
    <property type="entry name" value="A39437"/>
</dbReference>
<dbReference type="PIR" id="F95975">
    <property type="entry name" value="F95975"/>
</dbReference>
<dbReference type="RefSeq" id="NP_437610.1">
    <property type="nucleotide sequence ID" value="NC_003078.1"/>
</dbReference>
<dbReference type="RefSeq" id="WP_010975908.1">
    <property type="nucleotide sequence ID" value="NC_003078.1"/>
</dbReference>
<dbReference type="SMR" id="Q02730"/>
<dbReference type="EnsemblBacteria" id="CAC49470">
    <property type="protein sequence ID" value="CAC49470"/>
    <property type="gene ID" value="SM_b20947"/>
</dbReference>
<dbReference type="KEGG" id="sme:SM_b20947"/>
<dbReference type="PATRIC" id="fig|266834.11.peg.5999"/>
<dbReference type="eggNOG" id="ENOG502ZTHQ">
    <property type="taxonomic scope" value="Bacteria"/>
</dbReference>
<dbReference type="HOGENOM" id="CLU_2353631_0_0_5"/>
<dbReference type="OrthoDB" id="9802759at2"/>
<dbReference type="UniPathway" id="UPA00631"/>
<dbReference type="Proteomes" id="UP000001976">
    <property type="component" value="Plasmid pSymB"/>
</dbReference>
<dbReference type="GO" id="GO:0005886">
    <property type="term" value="C:plasma membrane"/>
    <property type="evidence" value="ECO:0007669"/>
    <property type="project" value="UniProtKB-SubCell"/>
</dbReference>
<dbReference type="GO" id="GO:0000271">
    <property type="term" value="P:polysaccharide biosynthetic process"/>
    <property type="evidence" value="ECO:0007669"/>
    <property type="project" value="UniProtKB-KW"/>
</dbReference>
<dbReference type="InterPro" id="IPR024239">
    <property type="entry name" value="SyrA"/>
</dbReference>
<dbReference type="Pfam" id="PF11089">
    <property type="entry name" value="SyrA"/>
    <property type="match status" value="1"/>
</dbReference>
<name>EXOX_RHIME</name>
<protein>
    <recommendedName>
        <fullName>Exopolysaccharide production repressor protein</fullName>
    </recommendedName>
</protein>
<comment type="function">
    <text>Inhibition of exopolysaccharide synthesis (EPS) and nodulation ability (NOD).</text>
</comment>
<comment type="pathway">
    <text>Glycan metabolism; exopolysaccharide biosynthesis.</text>
</comment>
<comment type="subcellular location">
    <subcellularLocation>
        <location evidence="3">Cell membrane</location>
        <topology evidence="3">Multi-pass membrane protein</topology>
    </subcellularLocation>
</comment>
<geneLocation type="plasmid">
    <name>pSymB</name>
    <name>megaplasmid 2</name>
</geneLocation>
<evidence type="ECO:0000255" key="1"/>
<evidence type="ECO:0000256" key="2">
    <source>
        <dbReference type="SAM" id="MobiDB-lite"/>
    </source>
</evidence>
<evidence type="ECO:0000305" key="3"/>
<gene>
    <name type="primary">exoX</name>
    <name type="ordered locus">RB1070</name>
    <name type="ORF">SMb20947</name>
</gene>
<accession>Q02730</accession>
<organism>
    <name type="scientific">Rhizobium meliloti (strain 1021)</name>
    <name type="common">Ensifer meliloti</name>
    <name type="synonym">Sinorhizobium meliloti</name>
    <dbReference type="NCBI Taxonomy" id="266834"/>
    <lineage>
        <taxon>Bacteria</taxon>
        <taxon>Pseudomonadati</taxon>
        <taxon>Pseudomonadota</taxon>
        <taxon>Alphaproteobacteria</taxon>
        <taxon>Hyphomicrobiales</taxon>
        <taxon>Rhizobiaceae</taxon>
        <taxon>Sinorhizobium/Ensifer group</taxon>
        <taxon>Sinorhizobium</taxon>
    </lineage>
</organism>
<keyword id="KW-1003">Cell membrane</keyword>
<keyword id="KW-0270">Exopolysaccharide synthesis</keyword>
<keyword id="KW-0472">Membrane</keyword>
<keyword id="KW-0536">Nodulation</keyword>
<keyword id="KW-0614">Plasmid</keyword>
<keyword id="KW-1185">Reference proteome</keyword>
<keyword id="KW-0812">Transmembrane</keyword>
<keyword id="KW-1133">Transmembrane helix</keyword>